<evidence type="ECO:0000255" key="1">
    <source>
        <dbReference type="HAMAP-Rule" id="MF_01471"/>
    </source>
</evidence>
<organism>
    <name type="scientific">Thermococcus kodakarensis (strain ATCC BAA-918 / JCM 12380 / KOD1)</name>
    <name type="common">Pyrococcus kodakaraensis (strain KOD1)</name>
    <dbReference type="NCBI Taxonomy" id="69014"/>
    <lineage>
        <taxon>Archaea</taxon>
        <taxon>Methanobacteriati</taxon>
        <taxon>Methanobacteriota</taxon>
        <taxon>Thermococci</taxon>
        <taxon>Thermococcales</taxon>
        <taxon>Thermococcaceae</taxon>
        <taxon>Thermococcus</taxon>
    </lineage>
</organism>
<accession>Q5JD44</accession>
<proteinExistence type="inferred from homology"/>
<dbReference type="EC" id="3.1.-.-" evidence="1"/>
<dbReference type="EMBL" id="AP006878">
    <property type="protein sequence ID" value="BAD84634.1"/>
    <property type="molecule type" value="Genomic_DNA"/>
</dbReference>
<dbReference type="RefSeq" id="WP_011249400.1">
    <property type="nucleotide sequence ID" value="NC_006624.1"/>
</dbReference>
<dbReference type="SMR" id="Q5JD44"/>
<dbReference type="STRING" id="69014.TK0445"/>
<dbReference type="EnsemblBacteria" id="BAD84634">
    <property type="protein sequence ID" value="BAD84634"/>
    <property type="gene ID" value="TK0445"/>
</dbReference>
<dbReference type="GeneID" id="78446956"/>
<dbReference type="KEGG" id="tko:TK0445"/>
<dbReference type="PATRIC" id="fig|69014.16.peg.438"/>
<dbReference type="eggNOG" id="arCOG04194">
    <property type="taxonomic scope" value="Archaea"/>
</dbReference>
<dbReference type="HOGENOM" id="CLU_161124_0_1_2"/>
<dbReference type="InParanoid" id="Q5JD44"/>
<dbReference type="OrthoDB" id="43236at2157"/>
<dbReference type="PhylomeDB" id="Q5JD44"/>
<dbReference type="Proteomes" id="UP000000536">
    <property type="component" value="Chromosome"/>
</dbReference>
<dbReference type="GO" id="GO:0046872">
    <property type="term" value="F:metal ion binding"/>
    <property type="evidence" value="ECO:0007669"/>
    <property type="project" value="UniProtKB-UniRule"/>
</dbReference>
<dbReference type="GO" id="GO:0004521">
    <property type="term" value="F:RNA endonuclease activity"/>
    <property type="evidence" value="ECO:0007669"/>
    <property type="project" value="InterPro"/>
</dbReference>
<dbReference type="GO" id="GO:0051607">
    <property type="term" value="P:defense response to virus"/>
    <property type="evidence" value="ECO:0007669"/>
    <property type="project" value="UniProtKB-UniRule"/>
</dbReference>
<dbReference type="GO" id="GO:0043571">
    <property type="term" value="P:maintenance of CRISPR repeat elements"/>
    <property type="evidence" value="ECO:0007669"/>
    <property type="project" value="UniProtKB-UniRule"/>
</dbReference>
<dbReference type="CDD" id="cd09725">
    <property type="entry name" value="Cas2_I_II_III"/>
    <property type="match status" value="1"/>
</dbReference>
<dbReference type="Gene3D" id="3.30.70.240">
    <property type="match status" value="1"/>
</dbReference>
<dbReference type="HAMAP" id="MF_01471">
    <property type="entry name" value="Cas2"/>
    <property type="match status" value="1"/>
</dbReference>
<dbReference type="InterPro" id="IPR021127">
    <property type="entry name" value="CRISPR_associated_Cas2"/>
</dbReference>
<dbReference type="InterPro" id="IPR019199">
    <property type="entry name" value="Virulence_VapD/CRISPR_Cas2"/>
</dbReference>
<dbReference type="NCBIfam" id="TIGR01573">
    <property type="entry name" value="cas2"/>
    <property type="match status" value="1"/>
</dbReference>
<dbReference type="PANTHER" id="PTHR34405">
    <property type="entry name" value="CRISPR-ASSOCIATED ENDORIBONUCLEASE CAS2"/>
    <property type="match status" value="1"/>
</dbReference>
<dbReference type="PANTHER" id="PTHR34405:SF1">
    <property type="entry name" value="CRISPR-ASSOCIATED ENDORIBONUCLEASE CAS2"/>
    <property type="match status" value="1"/>
</dbReference>
<dbReference type="Pfam" id="PF09827">
    <property type="entry name" value="CRISPR_Cas2"/>
    <property type="match status" value="1"/>
</dbReference>
<dbReference type="SUPFAM" id="SSF143430">
    <property type="entry name" value="TTP0101/SSO1404-like"/>
    <property type="match status" value="1"/>
</dbReference>
<feature type="chain" id="PRO_0000417752" description="CRISPR-associated endoribonuclease Cas2">
    <location>
        <begin position="1"/>
        <end position="85"/>
    </location>
</feature>
<feature type="binding site" evidence="1">
    <location>
        <position position="8"/>
    </location>
    <ligand>
        <name>Mg(2+)</name>
        <dbReference type="ChEBI" id="CHEBI:18420"/>
        <note>catalytic</note>
    </ligand>
</feature>
<comment type="function">
    <text evidence="1">CRISPR (clustered regularly interspaced short palindromic repeat), is an adaptive immune system that provides protection against mobile genetic elements (viruses, transposable elements and conjugative plasmids). CRISPR clusters contain sequences complementary to antecedent mobile elements and target invading nucleic acids. CRISPR clusters are transcribed and processed into CRISPR RNA (crRNA). Functions as a ssRNA-specific endoribonuclease. Involved in the integration of spacer DNA into the CRISPR cassette.</text>
</comment>
<comment type="cofactor">
    <cofactor evidence="1">
        <name>Mg(2+)</name>
        <dbReference type="ChEBI" id="CHEBI:18420"/>
    </cofactor>
</comment>
<comment type="subunit">
    <text evidence="1">Homodimer, forms a heterotetramer with a Cas1 homodimer.</text>
</comment>
<comment type="similarity">
    <text evidence="1">Belongs to the CRISPR-associated endoribonuclease Cas2 protein family.</text>
</comment>
<reference key="1">
    <citation type="journal article" date="2005" name="Genome Res.">
        <title>Complete genome sequence of the hyperthermophilic archaeon Thermococcus kodakaraensis KOD1 and comparison with Pyrococcus genomes.</title>
        <authorList>
            <person name="Fukui T."/>
            <person name="Atomi H."/>
            <person name="Kanai T."/>
            <person name="Matsumi R."/>
            <person name="Fujiwara S."/>
            <person name="Imanaka T."/>
        </authorList>
    </citation>
    <scope>NUCLEOTIDE SEQUENCE [LARGE SCALE GENOMIC DNA]</scope>
    <source>
        <strain>ATCC BAA-918 / JCM 12380 / KOD1</strain>
    </source>
</reference>
<sequence>MYIIVVYDVSVERVNRVKKFLRQHLHWVQNSVFEGEVTLAEFERIKAGIGELIDGDEDSVVIYKLRSMPKREVMGVEKNPIEDII</sequence>
<name>CAS2_THEKO</name>
<protein>
    <recommendedName>
        <fullName evidence="1">CRISPR-associated endoribonuclease Cas2</fullName>
        <ecNumber evidence="1">3.1.-.-</ecNumber>
    </recommendedName>
</protein>
<gene>
    <name evidence="1" type="primary">cas2</name>
    <name type="ordered locus">TK0445</name>
</gene>
<keyword id="KW-0051">Antiviral defense</keyword>
<keyword id="KW-0255">Endonuclease</keyword>
<keyword id="KW-0378">Hydrolase</keyword>
<keyword id="KW-0460">Magnesium</keyword>
<keyword id="KW-0479">Metal-binding</keyword>
<keyword id="KW-0540">Nuclease</keyword>
<keyword id="KW-1185">Reference proteome</keyword>